<comment type="function">
    <text evidence="1">Involved in the modulation of the specificity of the ClpAP-mediated ATP-dependent protein degradation.</text>
</comment>
<comment type="subunit">
    <text evidence="1">Binds to the N-terminal domain of the chaperone ClpA.</text>
</comment>
<comment type="similarity">
    <text evidence="1">Belongs to the ClpS family.</text>
</comment>
<proteinExistence type="inferred from homology"/>
<keyword id="KW-1185">Reference proteome</keyword>
<feature type="chain" id="PRO_0000215715" description="ATP-dependent Clp protease adapter protein ClpS">
    <location>
        <begin position="1"/>
        <end position="91"/>
    </location>
</feature>
<evidence type="ECO:0000255" key="1">
    <source>
        <dbReference type="HAMAP-Rule" id="MF_00302"/>
    </source>
</evidence>
<organism>
    <name type="scientific">Helicobacter pylori (strain ATCC 700392 / 26695)</name>
    <name type="common">Campylobacter pylori</name>
    <dbReference type="NCBI Taxonomy" id="85962"/>
    <lineage>
        <taxon>Bacteria</taxon>
        <taxon>Pseudomonadati</taxon>
        <taxon>Campylobacterota</taxon>
        <taxon>Epsilonproteobacteria</taxon>
        <taxon>Campylobacterales</taxon>
        <taxon>Helicobacteraceae</taxon>
        <taxon>Helicobacter</taxon>
    </lineage>
</organism>
<name>CLPS_HELPY</name>
<reference key="1">
    <citation type="journal article" date="1997" name="Nature">
        <title>The complete genome sequence of the gastric pathogen Helicobacter pylori.</title>
        <authorList>
            <person name="Tomb J.-F."/>
            <person name="White O."/>
            <person name="Kerlavage A.R."/>
            <person name="Clayton R.A."/>
            <person name="Sutton G.G."/>
            <person name="Fleischmann R.D."/>
            <person name="Ketchum K.A."/>
            <person name="Klenk H.-P."/>
            <person name="Gill S.R."/>
            <person name="Dougherty B.A."/>
            <person name="Nelson K.E."/>
            <person name="Quackenbush J."/>
            <person name="Zhou L."/>
            <person name="Kirkness E.F."/>
            <person name="Peterson S.N."/>
            <person name="Loftus B.J."/>
            <person name="Richardson D.L."/>
            <person name="Dodson R.J."/>
            <person name="Khalak H.G."/>
            <person name="Glodek A."/>
            <person name="McKenney K."/>
            <person name="FitzGerald L.M."/>
            <person name="Lee N."/>
            <person name="Adams M.D."/>
            <person name="Hickey E.K."/>
            <person name="Berg D.E."/>
            <person name="Gocayne J.D."/>
            <person name="Utterback T.R."/>
            <person name="Peterson J.D."/>
            <person name="Kelley J.M."/>
            <person name="Cotton M.D."/>
            <person name="Weidman J.F."/>
            <person name="Fujii C."/>
            <person name="Bowman C."/>
            <person name="Watthey L."/>
            <person name="Wallin E."/>
            <person name="Hayes W.S."/>
            <person name="Borodovsky M."/>
            <person name="Karp P.D."/>
            <person name="Smith H.O."/>
            <person name="Fraser C.M."/>
            <person name="Venter J.C."/>
        </authorList>
    </citation>
    <scope>NUCLEOTIDE SEQUENCE [LARGE SCALE GENOMIC DNA]</scope>
    <source>
        <strain>ATCC 700392 / 26695</strain>
    </source>
</reference>
<dbReference type="EMBL" id="AE000511">
    <property type="protein sequence ID" value="AAD07101.1"/>
    <property type="molecule type" value="Genomic_DNA"/>
</dbReference>
<dbReference type="PIR" id="H64523">
    <property type="entry name" value="H64523"/>
</dbReference>
<dbReference type="RefSeq" id="NP_206834.1">
    <property type="nucleotide sequence ID" value="NC_000915.1"/>
</dbReference>
<dbReference type="RefSeq" id="WP_000784920.1">
    <property type="nucleotide sequence ID" value="NC_018939.1"/>
</dbReference>
<dbReference type="SMR" id="P56066"/>
<dbReference type="DIP" id="DIP-3107N"/>
<dbReference type="FunCoup" id="P56066">
    <property type="interactions" value="134"/>
</dbReference>
<dbReference type="IntAct" id="P56066">
    <property type="interactions" value="4"/>
</dbReference>
<dbReference type="MINT" id="P56066"/>
<dbReference type="STRING" id="85962.HP_0032"/>
<dbReference type="PaxDb" id="85962-C694_00150"/>
<dbReference type="EnsemblBacteria" id="AAD07101">
    <property type="protein sequence ID" value="AAD07101"/>
    <property type="gene ID" value="HP_0032"/>
</dbReference>
<dbReference type="KEGG" id="heo:C694_00150"/>
<dbReference type="KEGG" id="hpy:HP_0032"/>
<dbReference type="PATRIC" id="fig|85962.47.peg.33"/>
<dbReference type="eggNOG" id="COG2127">
    <property type="taxonomic scope" value="Bacteria"/>
</dbReference>
<dbReference type="InParanoid" id="P56066"/>
<dbReference type="OrthoDB" id="9796121at2"/>
<dbReference type="PhylomeDB" id="P56066"/>
<dbReference type="Proteomes" id="UP000000429">
    <property type="component" value="Chromosome"/>
</dbReference>
<dbReference type="GO" id="GO:0030163">
    <property type="term" value="P:protein catabolic process"/>
    <property type="evidence" value="ECO:0007669"/>
    <property type="project" value="InterPro"/>
</dbReference>
<dbReference type="GO" id="GO:0006508">
    <property type="term" value="P:proteolysis"/>
    <property type="evidence" value="ECO:0007669"/>
    <property type="project" value="UniProtKB-UniRule"/>
</dbReference>
<dbReference type="Gene3D" id="3.30.1390.10">
    <property type="match status" value="1"/>
</dbReference>
<dbReference type="HAMAP" id="MF_00302">
    <property type="entry name" value="ClpS"/>
    <property type="match status" value="1"/>
</dbReference>
<dbReference type="InterPro" id="IPR022935">
    <property type="entry name" value="ClpS"/>
</dbReference>
<dbReference type="InterPro" id="IPR003769">
    <property type="entry name" value="ClpS_core"/>
</dbReference>
<dbReference type="InterPro" id="IPR014719">
    <property type="entry name" value="Ribosomal_bL12_C/ClpS-like"/>
</dbReference>
<dbReference type="Pfam" id="PF02617">
    <property type="entry name" value="ClpS"/>
    <property type="match status" value="1"/>
</dbReference>
<dbReference type="SUPFAM" id="SSF54736">
    <property type="entry name" value="ClpS-like"/>
    <property type="match status" value="1"/>
</dbReference>
<accession>P56066</accession>
<gene>
    <name evidence="1" type="primary">clpS</name>
    <name type="ordered locus">HP_0032</name>
</gene>
<protein>
    <recommendedName>
        <fullName evidence="1">ATP-dependent Clp protease adapter protein ClpS</fullName>
    </recommendedName>
</protein>
<sequence length="91" mass="10344">MKMYNIPTPTMAQVIMVDDPITTTEFVISALRDFFDKSLEEAKALTSSIHRDGEGVCGVYPYDIARHRAAWVRDKAKALEFPLKLLVEEIK</sequence>